<accession>B5YD88</accession>
<keyword id="KW-0067">ATP-binding</keyword>
<keyword id="KW-0131">Cell cycle</keyword>
<keyword id="KW-0132">Cell division</keyword>
<keyword id="KW-0227">DNA damage</keyword>
<keyword id="KW-0233">DNA recombination</keyword>
<keyword id="KW-0234">DNA repair</keyword>
<keyword id="KW-0235">DNA replication</keyword>
<keyword id="KW-0436">Ligase</keyword>
<keyword id="KW-0460">Magnesium</keyword>
<keyword id="KW-0479">Metal-binding</keyword>
<keyword id="KW-0547">Nucleotide-binding</keyword>
<sequence>MLFGELAQYFERIEKTTKRNEMMEILADLFRKVDKEEIDKIIYLLNGRVAPDYEKIEFGMSDKLVLRAMALALKIPLLELERSYKEVGDLGELVVKYSKNEGKDLTVVETFNTLYDIANLSGEGSVDAKVNRLAFLINSLTPQGGKYLVRIVLGKLRLGVGEPTIMDALSFAKVKDKGLRPFIERAFNITSDLGYVAKVFWEGGVEALKRIKVQVGRPIRMALAERVSRAEEIIKRLGKCAVEPKFDGFRCQIHKKENSVRIFSRNLEDNTYMFPDLVEAVLKQFPDRDVIIEGEAISYNPETGEFYPFQVTVQRKRKYNISEMVELYPLQLFAFDILYLDGEDTTSLPYIRRRQKLEEALVEGEKISITKNIITNDPKEIQSFFEECITEGLEGIVAKRLDAPYQAGMRNFNWIKLKRSYQGHLADTVDCVILGYFKGRGHRAKFGIGALLVGVYDDERDLFKTIAKIGTGPTEEEWVKFREILDEIKVEKRPNNVESFIEPDVWVEPKYVVVVQADEITRSPVHTCGRELDGLGYALRFPRVQGFVREDKGPYDATTVKEILEMFRNQKKEKVEEDSDLL</sequence>
<gene>
    <name evidence="1" type="primary">lig</name>
    <name type="ordered locus">DICTH_0616</name>
</gene>
<name>DNLI_DICT6</name>
<proteinExistence type="inferred from homology"/>
<dbReference type="EC" id="6.5.1.1" evidence="1"/>
<dbReference type="EMBL" id="CP001146">
    <property type="protein sequence ID" value="ACI19645.1"/>
    <property type="molecule type" value="Genomic_DNA"/>
</dbReference>
<dbReference type="RefSeq" id="WP_012548277.1">
    <property type="nucleotide sequence ID" value="NC_011297.1"/>
</dbReference>
<dbReference type="SMR" id="B5YD88"/>
<dbReference type="STRING" id="309799.DICTH_0616"/>
<dbReference type="PaxDb" id="309799-DICTH_0616"/>
<dbReference type="KEGG" id="dth:DICTH_0616"/>
<dbReference type="eggNOG" id="COG1793">
    <property type="taxonomic scope" value="Bacteria"/>
</dbReference>
<dbReference type="HOGENOM" id="CLU_005138_6_0_0"/>
<dbReference type="OrthoDB" id="9802472at2"/>
<dbReference type="Proteomes" id="UP000001733">
    <property type="component" value="Chromosome"/>
</dbReference>
<dbReference type="GO" id="GO:0005524">
    <property type="term" value="F:ATP binding"/>
    <property type="evidence" value="ECO:0007669"/>
    <property type="project" value="UniProtKB-UniRule"/>
</dbReference>
<dbReference type="GO" id="GO:0003677">
    <property type="term" value="F:DNA binding"/>
    <property type="evidence" value="ECO:0007669"/>
    <property type="project" value="InterPro"/>
</dbReference>
<dbReference type="GO" id="GO:0003910">
    <property type="term" value="F:DNA ligase (ATP) activity"/>
    <property type="evidence" value="ECO:0007669"/>
    <property type="project" value="UniProtKB-UniRule"/>
</dbReference>
<dbReference type="GO" id="GO:0046872">
    <property type="term" value="F:metal ion binding"/>
    <property type="evidence" value="ECO:0007669"/>
    <property type="project" value="UniProtKB-KW"/>
</dbReference>
<dbReference type="GO" id="GO:0051301">
    <property type="term" value="P:cell division"/>
    <property type="evidence" value="ECO:0007669"/>
    <property type="project" value="UniProtKB-KW"/>
</dbReference>
<dbReference type="GO" id="GO:0071897">
    <property type="term" value="P:DNA biosynthetic process"/>
    <property type="evidence" value="ECO:0007669"/>
    <property type="project" value="InterPro"/>
</dbReference>
<dbReference type="GO" id="GO:0006310">
    <property type="term" value="P:DNA recombination"/>
    <property type="evidence" value="ECO:0007669"/>
    <property type="project" value="UniProtKB-UniRule"/>
</dbReference>
<dbReference type="GO" id="GO:0006281">
    <property type="term" value="P:DNA repair"/>
    <property type="evidence" value="ECO:0007669"/>
    <property type="project" value="UniProtKB-UniRule"/>
</dbReference>
<dbReference type="GO" id="GO:0006273">
    <property type="term" value="P:lagging strand elongation"/>
    <property type="evidence" value="ECO:0007669"/>
    <property type="project" value="TreeGrafter"/>
</dbReference>
<dbReference type="CDD" id="cd07901">
    <property type="entry name" value="Adenylation_DNA_ligase_Arch_LigB"/>
    <property type="match status" value="1"/>
</dbReference>
<dbReference type="CDD" id="cd07893">
    <property type="entry name" value="OBF_DNA_ligase"/>
    <property type="match status" value="1"/>
</dbReference>
<dbReference type="FunFam" id="1.10.3260.10:FF:000007">
    <property type="entry name" value="DNA ligase"/>
    <property type="match status" value="1"/>
</dbReference>
<dbReference type="FunFam" id="3.30.470.30:FF:000012">
    <property type="entry name" value="Probable DNA ligase"/>
    <property type="match status" value="1"/>
</dbReference>
<dbReference type="Gene3D" id="1.10.3260.10">
    <property type="entry name" value="DNA ligase, ATP-dependent, N-terminal domain"/>
    <property type="match status" value="1"/>
</dbReference>
<dbReference type="Gene3D" id="3.30.470.30">
    <property type="entry name" value="DNA ligase/mRNA capping enzyme"/>
    <property type="match status" value="1"/>
</dbReference>
<dbReference type="Gene3D" id="2.40.50.140">
    <property type="entry name" value="Nucleic acid-binding proteins"/>
    <property type="match status" value="1"/>
</dbReference>
<dbReference type="HAMAP" id="MF_00407">
    <property type="entry name" value="DNA_ligase"/>
    <property type="match status" value="1"/>
</dbReference>
<dbReference type="InterPro" id="IPR050191">
    <property type="entry name" value="ATP-dep_DNA_ligase"/>
</dbReference>
<dbReference type="InterPro" id="IPR022865">
    <property type="entry name" value="DNA_ligae_ATP-dep_bac/arc"/>
</dbReference>
<dbReference type="InterPro" id="IPR000977">
    <property type="entry name" value="DNA_ligase_ATP-dep"/>
</dbReference>
<dbReference type="InterPro" id="IPR012309">
    <property type="entry name" value="DNA_ligase_ATP-dep_C"/>
</dbReference>
<dbReference type="InterPro" id="IPR012310">
    <property type="entry name" value="DNA_ligase_ATP-dep_cent"/>
</dbReference>
<dbReference type="InterPro" id="IPR016059">
    <property type="entry name" value="DNA_ligase_ATP-dep_CS"/>
</dbReference>
<dbReference type="InterPro" id="IPR012308">
    <property type="entry name" value="DNA_ligase_ATP-dep_N"/>
</dbReference>
<dbReference type="InterPro" id="IPR036599">
    <property type="entry name" value="DNA_ligase_N_sf"/>
</dbReference>
<dbReference type="InterPro" id="IPR012340">
    <property type="entry name" value="NA-bd_OB-fold"/>
</dbReference>
<dbReference type="NCBIfam" id="TIGR00574">
    <property type="entry name" value="dnl1"/>
    <property type="match status" value="1"/>
</dbReference>
<dbReference type="PANTHER" id="PTHR45674:SF4">
    <property type="entry name" value="DNA LIGASE 1"/>
    <property type="match status" value="1"/>
</dbReference>
<dbReference type="PANTHER" id="PTHR45674">
    <property type="entry name" value="DNA LIGASE 1/3 FAMILY MEMBER"/>
    <property type="match status" value="1"/>
</dbReference>
<dbReference type="Pfam" id="PF04679">
    <property type="entry name" value="DNA_ligase_A_C"/>
    <property type="match status" value="1"/>
</dbReference>
<dbReference type="Pfam" id="PF01068">
    <property type="entry name" value="DNA_ligase_A_M"/>
    <property type="match status" value="1"/>
</dbReference>
<dbReference type="Pfam" id="PF04675">
    <property type="entry name" value="DNA_ligase_A_N"/>
    <property type="match status" value="1"/>
</dbReference>
<dbReference type="SUPFAM" id="SSF117018">
    <property type="entry name" value="ATP-dependent DNA ligase DNA-binding domain"/>
    <property type="match status" value="1"/>
</dbReference>
<dbReference type="SUPFAM" id="SSF56091">
    <property type="entry name" value="DNA ligase/mRNA capping enzyme, catalytic domain"/>
    <property type="match status" value="1"/>
</dbReference>
<dbReference type="SUPFAM" id="SSF50249">
    <property type="entry name" value="Nucleic acid-binding proteins"/>
    <property type="match status" value="1"/>
</dbReference>
<dbReference type="PROSITE" id="PS00697">
    <property type="entry name" value="DNA_LIGASE_A1"/>
    <property type="match status" value="1"/>
</dbReference>
<dbReference type="PROSITE" id="PS00333">
    <property type="entry name" value="DNA_LIGASE_A2"/>
    <property type="match status" value="1"/>
</dbReference>
<dbReference type="PROSITE" id="PS50160">
    <property type="entry name" value="DNA_LIGASE_A3"/>
    <property type="match status" value="1"/>
</dbReference>
<evidence type="ECO:0000255" key="1">
    <source>
        <dbReference type="HAMAP-Rule" id="MF_00407"/>
    </source>
</evidence>
<organism>
    <name type="scientific">Dictyoglomus thermophilum (strain ATCC 35947 / DSM 3960 / H-6-12)</name>
    <dbReference type="NCBI Taxonomy" id="309799"/>
    <lineage>
        <taxon>Bacteria</taxon>
        <taxon>Pseudomonadati</taxon>
        <taxon>Dictyoglomota</taxon>
        <taxon>Dictyoglomia</taxon>
        <taxon>Dictyoglomales</taxon>
        <taxon>Dictyoglomaceae</taxon>
        <taxon>Dictyoglomus</taxon>
    </lineage>
</organism>
<comment type="function">
    <text evidence="1">DNA ligase that seals nicks in double-stranded DNA during DNA replication, DNA recombination and DNA repair.</text>
</comment>
<comment type="catalytic activity">
    <reaction evidence="1">
        <text>ATP + (deoxyribonucleotide)n-3'-hydroxyl + 5'-phospho-(deoxyribonucleotide)m = (deoxyribonucleotide)n+m + AMP + diphosphate.</text>
        <dbReference type="EC" id="6.5.1.1"/>
    </reaction>
</comment>
<comment type="cofactor">
    <cofactor evidence="1">
        <name>Mg(2+)</name>
        <dbReference type="ChEBI" id="CHEBI:18420"/>
    </cofactor>
</comment>
<comment type="similarity">
    <text evidence="1">Belongs to the ATP-dependent DNA ligase family.</text>
</comment>
<protein>
    <recommendedName>
        <fullName evidence="1">Probable DNA ligase</fullName>
        <ecNumber evidence="1">6.5.1.1</ecNumber>
    </recommendedName>
    <alternativeName>
        <fullName evidence="1">Polydeoxyribonucleotide synthase [ATP]</fullName>
    </alternativeName>
</protein>
<feature type="chain" id="PRO_0000365219" description="Probable DNA ligase">
    <location>
        <begin position="1"/>
        <end position="582"/>
    </location>
</feature>
<feature type="active site" description="N6-AMP-lysine intermediate" evidence="1">
    <location>
        <position position="245"/>
    </location>
</feature>
<feature type="binding site" evidence="1">
    <location>
        <position position="243"/>
    </location>
    <ligand>
        <name>ATP</name>
        <dbReference type="ChEBI" id="CHEBI:30616"/>
    </ligand>
</feature>
<feature type="binding site" evidence="1">
    <location>
        <position position="250"/>
    </location>
    <ligand>
        <name>ATP</name>
        <dbReference type="ChEBI" id="CHEBI:30616"/>
    </ligand>
</feature>
<feature type="binding site" evidence="1">
    <location>
        <position position="265"/>
    </location>
    <ligand>
        <name>ATP</name>
        <dbReference type="ChEBI" id="CHEBI:30616"/>
    </ligand>
</feature>
<feature type="binding site" evidence="1">
    <location>
        <position position="295"/>
    </location>
    <ligand>
        <name>ATP</name>
        <dbReference type="ChEBI" id="CHEBI:30616"/>
    </ligand>
</feature>
<feature type="binding site" evidence="1">
    <location>
        <position position="335"/>
    </location>
    <ligand>
        <name>ATP</name>
        <dbReference type="ChEBI" id="CHEBI:30616"/>
    </ligand>
</feature>
<feature type="binding site" evidence="1">
    <location>
        <position position="410"/>
    </location>
    <ligand>
        <name>ATP</name>
        <dbReference type="ChEBI" id="CHEBI:30616"/>
    </ligand>
</feature>
<feature type="binding site" evidence="1">
    <location>
        <position position="416"/>
    </location>
    <ligand>
        <name>ATP</name>
        <dbReference type="ChEBI" id="CHEBI:30616"/>
    </ligand>
</feature>
<reference key="1">
    <citation type="journal article" date="2014" name="Genome Announc.">
        <title>Complete Genome Sequence of the Extreme Thermophile Dictyoglomus thermophilum H-6-12.</title>
        <authorList>
            <person name="Coil D.A."/>
            <person name="Badger J.H."/>
            <person name="Forberger H.C."/>
            <person name="Riggs F."/>
            <person name="Madupu R."/>
            <person name="Fedorova N."/>
            <person name="Ward N."/>
            <person name="Robb F.T."/>
            <person name="Eisen J.A."/>
        </authorList>
    </citation>
    <scope>NUCLEOTIDE SEQUENCE [LARGE SCALE GENOMIC DNA]</scope>
    <source>
        <strain>ATCC 35947 / DSM 3960 / H-6-12</strain>
    </source>
</reference>